<evidence type="ECO:0000255" key="1">
    <source>
        <dbReference type="PROSITE-ProRule" id="PRU00159"/>
    </source>
</evidence>
<keyword id="KW-1185">Reference proteome</keyword>
<comment type="domain">
    <text>The protein kinase domain is predicted to be catalytically inactive.</text>
</comment>
<comment type="similarity">
    <text evidence="1">Belongs to the protein kinase superfamily. Ser/Thr protein kinase family.</text>
</comment>
<protein>
    <recommendedName>
        <fullName>Probable inactive serine/threonine-protein kinase DDB_G0280559</fullName>
    </recommendedName>
</protein>
<name>Y0559_DICDI</name>
<organism>
    <name type="scientific">Dictyostelium discoideum</name>
    <name type="common">Social amoeba</name>
    <dbReference type="NCBI Taxonomy" id="44689"/>
    <lineage>
        <taxon>Eukaryota</taxon>
        <taxon>Amoebozoa</taxon>
        <taxon>Evosea</taxon>
        <taxon>Eumycetozoa</taxon>
        <taxon>Dictyostelia</taxon>
        <taxon>Dictyosteliales</taxon>
        <taxon>Dictyosteliaceae</taxon>
        <taxon>Dictyostelium</taxon>
    </lineage>
</organism>
<accession>Q54V82</accession>
<reference key="1">
    <citation type="journal article" date="2005" name="Nature">
        <title>The genome of the social amoeba Dictyostelium discoideum.</title>
        <authorList>
            <person name="Eichinger L."/>
            <person name="Pachebat J.A."/>
            <person name="Gloeckner G."/>
            <person name="Rajandream M.A."/>
            <person name="Sucgang R."/>
            <person name="Berriman M."/>
            <person name="Song J."/>
            <person name="Olsen R."/>
            <person name="Szafranski K."/>
            <person name="Xu Q."/>
            <person name="Tunggal B."/>
            <person name="Kummerfeld S."/>
            <person name="Madera M."/>
            <person name="Konfortov B.A."/>
            <person name="Rivero F."/>
            <person name="Bankier A.T."/>
            <person name="Lehmann R."/>
            <person name="Hamlin N."/>
            <person name="Davies R."/>
            <person name="Gaudet P."/>
            <person name="Fey P."/>
            <person name="Pilcher K."/>
            <person name="Chen G."/>
            <person name="Saunders D."/>
            <person name="Sodergren E.J."/>
            <person name="Davis P."/>
            <person name="Kerhornou A."/>
            <person name="Nie X."/>
            <person name="Hall N."/>
            <person name="Anjard C."/>
            <person name="Hemphill L."/>
            <person name="Bason N."/>
            <person name="Farbrother P."/>
            <person name="Desany B."/>
            <person name="Just E."/>
            <person name="Morio T."/>
            <person name="Rost R."/>
            <person name="Churcher C.M."/>
            <person name="Cooper J."/>
            <person name="Haydock S."/>
            <person name="van Driessche N."/>
            <person name="Cronin A."/>
            <person name="Goodhead I."/>
            <person name="Muzny D.M."/>
            <person name="Mourier T."/>
            <person name="Pain A."/>
            <person name="Lu M."/>
            <person name="Harper D."/>
            <person name="Lindsay R."/>
            <person name="Hauser H."/>
            <person name="James K.D."/>
            <person name="Quiles M."/>
            <person name="Madan Babu M."/>
            <person name="Saito T."/>
            <person name="Buchrieser C."/>
            <person name="Wardroper A."/>
            <person name="Felder M."/>
            <person name="Thangavelu M."/>
            <person name="Johnson D."/>
            <person name="Knights A."/>
            <person name="Loulseged H."/>
            <person name="Mungall K.L."/>
            <person name="Oliver K."/>
            <person name="Price C."/>
            <person name="Quail M.A."/>
            <person name="Urushihara H."/>
            <person name="Hernandez J."/>
            <person name="Rabbinowitsch E."/>
            <person name="Steffen D."/>
            <person name="Sanders M."/>
            <person name="Ma J."/>
            <person name="Kohara Y."/>
            <person name="Sharp S."/>
            <person name="Simmonds M.N."/>
            <person name="Spiegler S."/>
            <person name="Tivey A."/>
            <person name="Sugano S."/>
            <person name="White B."/>
            <person name="Walker D."/>
            <person name="Woodward J.R."/>
            <person name="Winckler T."/>
            <person name="Tanaka Y."/>
            <person name="Shaulsky G."/>
            <person name="Schleicher M."/>
            <person name="Weinstock G.M."/>
            <person name="Rosenthal A."/>
            <person name="Cox E.C."/>
            <person name="Chisholm R.L."/>
            <person name="Gibbs R.A."/>
            <person name="Loomis W.F."/>
            <person name="Platzer M."/>
            <person name="Kay R.R."/>
            <person name="Williams J.G."/>
            <person name="Dear P.H."/>
            <person name="Noegel A.A."/>
            <person name="Barrell B.G."/>
            <person name="Kuspa A."/>
        </authorList>
    </citation>
    <scope>NUCLEOTIDE SEQUENCE [LARGE SCALE GENOMIC DNA]</scope>
    <source>
        <strain>AX4</strain>
    </source>
</reference>
<feature type="chain" id="PRO_0000362039" description="Probable inactive serine/threonine-protein kinase DDB_G0280559">
    <location>
        <begin position="1"/>
        <end position="213"/>
    </location>
</feature>
<feature type="domain" description="Protein kinase" evidence="1">
    <location>
        <begin position="1"/>
        <end position="211"/>
    </location>
</feature>
<sequence>MVLRYSYVFKQPVNYSNIELNEIKNIKDEKVRQNSIFISYLNGLYNSLNVLEMVSISGSLPSKLIQSIFKIILSNYDYNAIGKHFKTESILIGESLFKWPSPRIQQFDQFFFQDYLYSSPENYKGSLVGVNEYSMVWTLGIILYQCLTGELPFPTYPKIVNFITSSSQNVEIPPQFYKPENSLLIQLITCCLFKNPAQRISWNEIVNHSFFKN</sequence>
<dbReference type="EMBL" id="AAFI02000037">
    <property type="protein sequence ID" value="EAL67081.1"/>
    <property type="molecule type" value="Genomic_DNA"/>
</dbReference>
<dbReference type="RefSeq" id="XP_641049.1">
    <property type="nucleotide sequence ID" value="XM_635957.1"/>
</dbReference>
<dbReference type="SMR" id="Q54V82"/>
<dbReference type="PaxDb" id="44689-DDB0229337"/>
<dbReference type="EnsemblProtists" id="EAL67081">
    <property type="protein sequence ID" value="EAL67081"/>
    <property type="gene ID" value="DDB_G0280559"/>
</dbReference>
<dbReference type="GeneID" id="8622607"/>
<dbReference type="KEGG" id="ddi:DDB_G0280559"/>
<dbReference type="dictyBase" id="DDB_G0280559"/>
<dbReference type="VEuPathDB" id="AmoebaDB:DDB_G0280559"/>
<dbReference type="HOGENOM" id="CLU_1296446_0_0_1"/>
<dbReference type="InParanoid" id="Q54V82"/>
<dbReference type="PhylomeDB" id="Q54V82"/>
<dbReference type="PRO" id="PR:Q54V82"/>
<dbReference type="Proteomes" id="UP000002195">
    <property type="component" value="Chromosome 3"/>
</dbReference>
<dbReference type="GO" id="GO:0005524">
    <property type="term" value="F:ATP binding"/>
    <property type="evidence" value="ECO:0007669"/>
    <property type="project" value="InterPro"/>
</dbReference>
<dbReference type="GO" id="GO:0004674">
    <property type="term" value="F:protein serine/threonine kinase activity"/>
    <property type="evidence" value="ECO:0007669"/>
    <property type="project" value="InterPro"/>
</dbReference>
<dbReference type="GO" id="GO:0010506">
    <property type="term" value="P:regulation of autophagy"/>
    <property type="evidence" value="ECO:0007669"/>
    <property type="project" value="InterPro"/>
</dbReference>
<dbReference type="Gene3D" id="1.10.510.10">
    <property type="entry name" value="Transferase(Phosphotransferase) domain 1"/>
    <property type="match status" value="1"/>
</dbReference>
<dbReference type="InterPro" id="IPR045269">
    <property type="entry name" value="Atg1-like"/>
</dbReference>
<dbReference type="InterPro" id="IPR011009">
    <property type="entry name" value="Kinase-like_dom_sf"/>
</dbReference>
<dbReference type="InterPro" id="IPR000719">
    <property type="entry name" value="Prot_kinase_dom"/>
</dbReference>
<dbReference type="PANTHER" id="PTHR24348">
    <property type="entry name" value="SERINE/THREONINE-PROTEIN KINASE UNC-51-RELATED"/>
    <property type="match status" value="1"/>
</dbReference>
<dbReference type="Pfam" id="PF00069">
    <property type="entry name" value="Pkinase"/>
    <property type="match status" value="1"/>
</dbReference>
<dbReference type="SMART" id="SM00220">
    <property type="entry name" value="S_TKc"/>
    <property type="match status" value="1"/>
</dbReference>
<dbReference type="SUPFAM" id="SSF56112">
    <property type="entry name" value="Protein kinase-like (PK-like)"/>
    <property type="match status" value="1"/>
</dbReference>
<dbReference type="PROSITE" id="PS50011">
    <property type="entry name" value="PROTEIN_KINASE_DOM"/>
    <property type="match status" value="1"/>
</dbReference>
<proteinExistence type="inferred from homology"/>
<gene>
    <name type="ORF">DDB_G0280559</name>
</gene>